<reference key="1">
    <citation type="journal article" date="2011" name="J. Bacteriol.">
        <title>Comparative genomics of 28 Salmonella enterica isolates: evidence for CRISPR-mediated adaptive sublineage evolution.</title>
        <authorList>
            <person name="Fricke W.F."/>
            <person name="Mammel M.K."/>
            <person name="McDermott P.F."/>
            <person name="Tartera C."/>
            <person name="White D.G."/>
            <person name="Leclerc J.E."/>
            <person name="Ravel J."/>
            <person name="Cebula T.A."/>
        </authorList>
    </citation>
    <scope>NUCLEOTIDE SEQUENCE [LARGE SCALE GENOMIC DNA]</scope>
    <source>
        <strain>CT_02021853</strain>
    </source>
</reference>
<feature type="chain" id="PRO_1000197336" description="Spermidine export protein MdtJ">
    <location>
        <begin position="1"/>
        <end position="120"/>
    </location>
</feature>
<feature type="transmembrane region" description="Helical" evidence="1">
    <location>
        <begin position="1"/>
        <end position="21"/>
    </location>
</feature>
<feature type="transmembrane region" description="Helical" evidence="1">
    <location>
        <begin position="31"/>
        <end position="51"/>
    </location>
</feature>
<feature type="transmembrane region" description="Helical" evidence="1">
    <location>
        <begin position="54"/>
        <end position="74"/>
    </location>
</feature>
<feature type="transmembrane region" description="Helical" evidence="1">
    <location>
        <begin position="81"/>
        <end position="101"/>
    </location>
</feature>
<sequence>MFYWILLALAIATEITGTLSMKWASVGNGNAGFILMLVMITLSYIFLSFAVKKIALGVAYALWEGIGILFITIFSVLLFDEALSTMKIAGLLTLVAGIVLIKSGTRKPGKPVKEATRATI</sequence>
<comment type="function">
    <text evidence="1">Catalyzes the excretion of spermidine.</text>
</comment>
<comment type="subunit">
    <text evidence="1">Forms a complex with MdtI.</text>
</comment>
<comment type="subcellular location">
    <subcellularLocation>
        <location evidence="1">Cell inner membrane</location>
        <topology evidence="1">Multi-pass membrane protein</topology>
    </subcellularLocation>
</comment>
<comment type="similarity">
    <text evidence="1">Belongs to the drug/metabolite transporter (DMT) superfamily. Small multidrug resistance (SMR) (TC 2.A.7.1) family. MdtJ subfamily.</text>
</comment>
<organism>
    <name type="scientific">Salmonella dublin (strain CT_02021853)</name>
    <dbReference type="NCBI Taxonomy" id="439851"/>
    <lineage>
        <taxon>Bacteria</taxon>
        <taxon>Pseudomonadati</taxon>
        <taxon>Pseudomonadota</taxon>
        <taxon>Gammaproteobacteria</taxon>
        <taxon>Enterobacterales</taxon>
        <taxon>Enterobacteriaceae</taxon>
        <taxon>Salmonella</taxon>
    </lineage>
</organism>
<name>MDTJ_SALDC</name>
<protein>
    <recommendedName>
        <fullName evidence="1">Spermidine export protein MdtJ</fullName>
    </recommendedName>
</protein>
<gene>
    <name evidence="1" type="primary">mdtJ</name>
    <name type="ordered locus">SeD_A1858</name>
</gene>
<keyword id="KW-0997">Cell inner membrane</keyword>
<keyword id="KW-1003">Cell membrane</keyword>
<keyword id="KW-0472">Membrane</keyword>
<keyword id="KW-0812">Transmembrane</keyword>
<keyword id="KW-1133">Transmembrane helix</keyword>
<keyword id="KW-0813">Transport</keyword>
<evidence type="ECO:0000255" key="1">
    <source>
        <dbReference type="HAMAP-Rule" id="MF_01598"/>
    </source>
</evidence>
<accession>B5FHS2</accession>
<dbReference type="EMBL" id="CP001144">
    <property type="protein sequence ID" value="ACH73591.1"/>
    <property type="molecule type" value="Genomic_DNA"/>
</dbReference>
<dbReference type="RefSeq" id="WP_000500278.1">
    <property type="nucleotide sequence ID" value="NC_011205.1"/>
</dbReference>
<dbReference type="SMR" id="B5FHS2"/>
<dbReference type="KEGG" id="sed:SeD_A1858"/>
<dbReference type="HOGENOM" id="CLU_133067_0_0_6"/>
<dbReference type="Proteomes" id="UP000008322">
    <property type="component" value="Chromosome"/>
</dbReference>
<dbReference type="GO" id="GO:0005886">
    <property type="term" value="C:plasma membrane"/>
    <property type="evidence" value="ECO:0007669"/>
    <property type="project" value="UniProtKB-SubCell"/>
</dbReference>
<dbReference type="GO" id="GO:0015199">
    <property type="term" value="F:amino-acid betaine transmembrane transporter activity"/>
    <property type="evidence" value="ECO:0007669"/>
    <property type="project" value="TreeGrafter"/>
</dbReference>
<dbReference type="GO" id="GO:0015297">
    <property type="term" value="F:antiporter activity"/>
    <property type="evidence" value="ECO:0007669"/>
    <property type="project" value="TreeGrafter"/>
</dbReference>
<dbReference type="GO" id="GO:0015220">
    <property type="term" value="F:choline transmembrane transporter activity"/>
    <property type="evidence" value="ECO:0007669"/>
    <property type="project" value="TreeGrafter"/>
</dbReference>
<dbReference type="GO" id="GO:0015606">
    <property type="term" value="F:spermidine transmembrane transporter activity"/>
    <property type="evidence" value="ECO:0007669"/>
    <property type="project" value="UniProtKB-UniRule"/>
</dbReference>
<dbReference type="GO" id="GO:0031460">
    <property type="term" value="P:glycine betaine transport"/>
    <property type="evidence" value="ECO:0007669"/>
    <property type="project" value="TreeGrafter"/>
</dbReference>
<dbReference type="FunFam" id="1.10.3730.20:FF:000001">
    <property type="entry name" value="Quaternary ammonium compound resistance transporter SugE"/>
    <property type="match status" value="1"/>
</dbReference>
<dbReference type="Gene3D" id="1.10.3730.20">
    <property type="match status" value="1"/>
</dbReference>
<dbReference type="HAMAP" id="MF_01598">
    <property type="entry name" value="MdtJ"/>
    <property type="match status" value="1"/>
</dbReference>
<dbReference type="InterPro" id="IPR000390">
    <property type="entry name" value="Small_drug/metabolite_transptr"/>
</dbReference>
<dbReference type="InterPro" id="IPR045324">
    <property type="entry name" value="Small_multidrug_res"/>
</dbReference>
<dbReference type="InterPro" id="IPR023740">
    <property type="entry name" value="Spermidine_export_MdtJ"/>
</dbReference>
<dbReference type="NCBIfam" id="NF007767">
    <property type="entry name" value="PRK10452.1"/>
    <property type="match status" value="1"/>
</dbReference>
<dbReference type="PANTHER" id="PTHR30561">
    <property type="entry name" value="SMR FAMILY PROTON-DEPENDENT DRUG EFFLUX TRANSPORTER SUGE"/>
    <property type="match status" value="1"/>
</dbReference>
<dbReference type="PANTHER" id="PTHR30561:SF2">
    <property type="entry name" value="SPERMIDINE EXPORT PROTEIN MDTJ"/>
    <property type="match status" value="1"/>
</dbReference>
<dbReference type="Pfam" id="PF00893">
    <property type="entry name" value="Multi_Drug_Res"/>
    <property type="match status" value="1"/>
</dbReference>
<dbReference type="SUPFAM" id="SSF103481">
    <property type="entry name" value="Multidrug resistance efflux transporter EmrE"/>
    <property type="match status" value="1"/>
</dbReference>
<proteinExistence type="inferred from homology"/>